<evidence type="ECO:0000250" key="1">
    <source>
        <dbReference type="UniProtKB" id="P00846"/>
    </source>
</evidence>
<evidence type="ECO:0000255" key="2"/>
<evidence type="ECO:0000305" key="3"/>
<keyword id="KW-0066">ATP synthesis</keyword>
<keyword id="KW-0138">CF(0)</keyword>
<keyword id="KW-0375">Hydrogen ion transport</keyword>
<keyword id="KW-0406">Ion transport</keyword>
<keyword id="KW-0472">Membrane</keyword>
<keyword id="KW-0496">Mitochondrion</keyword>
<keyword id="KW-0999">Mitochondrion inner membrane</keyword>
<keyword id="KW-0812">Transmembrane</keyword>
<keyword id="KW-1133">Transmembrane helix</keyword>
<keyword id="KW-0813">Transport</keyword>
<name>ATP6_STRCA</name>
<sequence>MNLSFFDQFASPQLLGIPLILLSLLFPTLLLPSPNNRWINNRLSTLQLWFLQLITKQLMMPLNKAGHKWALILTSLMTFLLLINLLGLLPYTFTPTTQLSMNMALAFPLWLATLLTGLRNQPSISLGHLLPEGTPTPLIPALILIETTSLLIRPLALGVRLTANLTAGHLLIQLISTATLALLPTMPTISVLTATVLLLLTILELAVAMIQAYVFVLLLSLYLQENI</sequence>
<comment type="function">
    <text evidence="1">Subunit a, of the mitochondrial membrane ATP synthase complex (F(1)F(0) ATP synthase or Complex V) that produces ATP from ADP in the presence of a proton gradient across the membrane which is generated by electron transport complexes of the respiratory chain. ATP synthase complex consist of a soluble F(1) head domain - the catalytic core - and a membrane F(1) domain - the membrane proton channel. These two domains are linked by a central stalk rotating inside the F(1) region and a stationary peripheral stalk. During catalysis, ATP synthesis in the catalytic domain of F(1) is coupled via a rotary mechanism of the central stalk subunits to proton translocation. With the subunit c (ATP5MC1), forms the proton-conducting channel in the F(0) domain, that contains two crucial half-channels (inlet and outlet) that facilitate proton movement from the mitochondrial intermembrane space (IMS) into the matrix. Protons are taken up via the inlet half-channel and released through the outlet half-channel, following a Grotthuss mechanism.</text>
</comment>
<comment type="catalytic activity">
    <reaction evidence="1">
        <text>H(+)(in) = H(+)(out)</text>
        <dbReference type="Rhea" id="RHEA:34979"/>
        <dbReference type="ChEBI" id="CHEBI:15378"/>
    </reaction>
</comment>
<comment type="subunit">
    <text evidence="1">Component of the ATP synthase complex composed at least of ATP5F1A/subunit alpha, ATP5F1B/subunit beta, ATP5MC1/subunit c (homooctomer), MT-ATP6/subunit a, MT-ATP8/subunit 8, ATP5ME/subunit e, ATP5MF/subunit f, ATP5MG/subunit g, ATP5MK/subunit k, ATP5MJ/subunit j, ATP5F1C/subunit gamma, ATP5F1D/subunit delta, ATP5F1E/subunit epsilon, ATP5PF/subunit F6, ATP5PB/subunit b, ATP5PD/subunit d, ATP5PO/subunit OSCP. ATP synthase complex consists of a soluble F(1) head domain (subunits alpha(3) and beta(3)) - the catalytic core - and a membrane F(0) domain - the membrane proton channel (subunits c, a, 8, e, f, g, k and j). These two domains are linked by a central stalk (subunits gamma, delta, and epsilon) rotating inside the F1 region and a stationary peripheral stalk (subunits F6, b, d, and OSCP). Interacts with DNAJC30; interaction is direct.</text>
</comment>
<comment type="subcellular location">
    <subcellularLocation>
        <location>Mitochondrion inner membrane</location>
        <topology>Multi-pass membrane protein</topology>
    </subcellularLocation>
</comment>
<comment type="similarity">
    <text evidence="3">Belongs to the ATPase A chain family.</text>
</comment>
<accession>O21402</accession>
<dbReference type="EMBL" id="Y12025">
    <property type="protein sequence ID" value="CAA72749.1"/>
    <property type="molecule type" value="Genomic_DNA"/>
</dbReference>
<dbReference type="EMBL" id="AF069429">
    <property type="protein sequence ID" value="AAD09388.1"/>
    <property type="molecule type" value="Genomic_DNA"/>
</dbReference>
<dbReference type="EMBL" id="AF338715">
    <property type="protein sequence ID" value="AAK53345.1"/>
    <property type="molecule type" value="Genomic_DNA"/>
</dbReference>
<dbReference type="PIR" id="F90612">
    <property type="entry name" value="F90612"/>
</dbReference>
<dbReference type="PIR" id="T12414">
    <property type="entry name" value="T12414"/>
</dbReference>
<dbReference type="RefSeq" id="NP_115446.1">
    <property type="nucleotide sequence ID" value="NC_002785.1"/>
</dbReference>
<dbReference type="SMR" id="O21402"/>
<dbReference type="GeneID" id="803276"/>
<dbReference type="CTD" id="4508"/>
<dbReference type="GO" id="GO:0005743">
    <property type="term" value="C:mitochondrial inner membrane"/>
    <property type="evidence" value="ECO:0007669"/>
    <property type="project" value="UniProtKB-SubCell"/>
</dbReference>
<dbReference type="GO" id="GO:0045259">
    <property type="term" value="C:proton-transporting ATP synthase complex"/>
    <property type="evidence" value="ECO:0000250"/>
    <property type="project" value="UniProtKB"/>
</dbReference>
<dbReference type="GO" id="GO:0015252">
    <property type="term" value="F:proton channel activity"/>
    <property type="evidence" value="ECO:0000250"/>
    <property type="project" value="UniProtKB"/>
</dbReference>
<dbReference type="GO" id="GO:0046933">
    <property type="term" value="F:proton-transporting ATP synthase activity, rotational mechanism"/>
    <property type="evidence" value="ECO:0007669"/>
    <property type="project" value="TreeGrafter"/>
</dbReference>
<dbReference type="GO" id="GO:0015986">
    <property type="term" value="P:proton motive force-driven ATP synthesis"/>
    <property type="evidence" value="ECO:0000250"/>
    <property type="project" value="UniProtKB"/>
</dbReference>
<dbReference type="GO" id="GO:1902600">
    <property type="term" value="P:proton transmembrane transport"/>
    <property type="evidence" value="ECO:0000250"/>
    <property type="project" value="UniProtKB"/>
</dbReference>
<dbReference type="CDD" id="cd00310">
    <property type="entry name" value="ATP-synt_Fo_a_6"/>
    <property type="match status" value="1"/>
</dbReference>
<dbReference type="FunFam" id="1.20.120.220:FF:000004">
    <property type="entry name" value="ATP synthase subunit a"/>
    <property type="match status" value="1"/>
</dbReference>
<dbReference type="Gene3D" id="1.20.120.220">
    <property type="entry name" value="ATP synthase, F0 complex, subunit A"/>
    <property type="match status" value="1"/>
</dbReference>
<dbReference type="InterPro" id="IPR000568">
    <property type="entry name" value="ATP_synth_F0_asu"/>
</dbReference>
<dbReference type="InterPro" id="IPR023011">
    <property type="entry name" value="ATP_synth_F0_asu_AS"/>
</dbReference>
<dbReference type="InterPro" id="IPR045083">
    <property type="entry name" value="ATP_synth_F0_asu_bact/mt"/>
</dbReference>
<dbReference type="InterPro" id="IPR035908">
    <property type="entry name" value="F0_ATP_A_sf"/>
</dbReference>
<dbReference type="NCBIfam" id="TIGR01131">
    <property type="entry name" value="ATP_synt_6_or_A"/>
    <property type="match status" value="1"/>
</dbReference>
<dbReference type="PANTHER" id="PTHR11410">
    <property type="entry name" value="ATP SYNTHASE SUBUNIT A"/>
    <property type="match status" value="1"/>
</dbReference>
<dbReference type="PANTHER" id="PTHR11410:SF0">
    <property type="entry name" value="ATP SYNTHASE SUBUNIT A"/>
    <property type="match status" value="1"/>
</dbReference>
<dbReference type="Pfam" id="PF00119">
    <property type="entry name" value="ATP-synt_A"/>
    <property type="match status" value="1"/>
</dbReference>
<dbReference type="PRINTS" id="PR00123">
    <property type="entry name" value="ATPASEA"/>
</dbReference>
<dbReference type="SUPFAM" id="SSF81336">
    <property type="entry name" value="F1F0 ATP synthase subunit A"/>
    <property type="match status" value="1"/>
</dbReference>
<dbReference type="PROSITE" id="PS00449">
    <property type="entry name" value="ATPASE_A"/>
    <property type="match status" value="1"/>
</dbReference>
<protein>
    <recommendedName>
        <fullName evidence="1">ATP synthase F(0) complex subunit a</fullName>
    </recommendedName>
    <alternativeName>
        <fullName>F-ATPase protein 6</fullName>
    </alternativeName>
    <alternativeName>
        <fullName evidence="1">Proton-conducting channel, ATP synthase F(0) complex subunit a</fullName>
    </alternativeName>
</protein>
<gene>
    <name evidence="1" type="primary">MT-ATP6</name>
    <name type="synonym">ATP6</name>
    <name type="synonym">ATPASE6</name>
    <name type="synonym">MTATP6</name>
</gene>
<feature type="chain" id="PRO_0000082173" description="ATP synthase F(0) complex subunit a">
    <location>
        <begin position="1"/>
        <end position="227"/>
    </location>
</feature>
<feature type="transmembrane region" description="Helical" evidence="2">
    <location>
        <begin position="14"/>
        <end position="34"/>
    </location>
</feature>
<feature type="transmembrane region" description="Helical" evidence="2">
    <location>
        <begin position="69"/>
        <end position="89"/>
    </location>
</feature>
<feature type="transmembrane region" description="Helical" evidence="2">
    <location>
        <begin position="98"/>
        <end position="118"/>
    </location>
</feature>
<feature type="transmembrane region" description="Helical" evidence="2">
    <location>
        <begin position="139"/>
        <end position="159"/>
    </location>
</feature>
<feature type="transmembrane region" description="Helical" evidence="2">
    <location>
        <begin position="174"/>
        <end position="194"/>
    </location>
</feature>
<feature type="transmembrane region" description="Helical" evidence="2">
    <location>
        <begin position="196"/>
        <end position="216"/>
    </location>
</feature>
<geneLocation type="mitochondrion"/>
<organism>
    <name type="scientific">Struthio camelus</name>
    <name type="common">Common ostrich</name>
    <dbReference type="NCBI Taxonomy" id="8801"/>
    <lineage>
        <taxon>Eukaryota</taxon>
        <taxon>Metazoa</taxon>
        <taxon>Chordata</taxon>
        <taxon>Craniata</taxon>
        <taxon>Vertebrata</taxon>
        <taxon>Euteleostomi</taxon>
        <taxon>Archelosauria</taxon>
        <taxon>Archosauria</taxon>
        <taxon>Dinosauria</taxon>
        <taxon>Saurischia</taxon>
        <taxon>Theropoda</taxon>
        <taxon>Coelurosauria</taxon>
        <taxon>Aves</taxon>
        <taxon>Palaeognathae</taxon>
        <taxon>Struthioniformes</taxon>
        <taxon>Struthionidae</taxon>
        <taxon>Struthio</taxon>
    </lineage>
</organism>
<reference key="1">
    <citation type="journal article" date="1997" name="Mol. Biol. Evol.">
        <title>The mtDNA sequence of the ostrich and the divergence between paleognathous and neognathous birds.</title>
        <authorList>
            <person name="Harlid A."/>
            <person name="Janke A."/>
            <person name="Arnason U."/>
        </authorList>
    </citation>
    <scope>NUCLEOTIDE SEQUENCE [GENOMIC DNA]</scope>
</reference>
<reference key="2">
    <citation type="submission" date="1998-06" db="EMBL/GenBank/DDBJ databases">
        <title>Primers for a PCR-based approach to complete mitochondrial genome sequencing.</title>
        <authorList>
            <person name="Sorenson M.D."/>
            <person name="Dimcheff D.E."/>
            <person name="Ast J.C."/>
            <person name="Yuri T."/>
            <person name="Mindell D.P."/>
        </authorList>
    </citation>
    <scope>NUCLEOTIDE SEQUENCE [GENOMIC DNA]</scope>
</reference>
<reference key="3">
    <citation type="journal article" date="2001" name="Proc. R. Soc. B">
        <title>Complete mitochondrial DNA genome sequences of extinct birds: ratite phylogenetics and the vicariance biogeography hypothesis.</title>
        <authorList>
            <person name="Haddrath O."/>
            <person name="Baker A.J."/>
        </authorList>
    </citation>
    <scope>NUCLEOTIDE SEQUENCE [GENOMIC DNA]</scope>
</reference>
<proteinExistence type="inferred from homology"/>